<sequence length="156" mass="16990">MNINLTLIGQAIAFAFFVAFCMKFVWPPLINAISERQRKIADGLNAAEKAKADLADAQAQVKQELDAAKAQAAQLIEQANRRAAQLIEEARTQAAAEGERIRQQAKEAVDQEINSAREELRQQVAALAVTGAEKILNQQVDAEAHNAMLSQLAAKL</sequence>
<gene>
    <name evidence="1" type="primary">atpF</name>
    <name type="ordered locus">AB57_0189</name>
</gene>
<comment type="function">
    <text evidence="1">F(1)F(0) ATP synthase produces ATP from ADP in the presence of a proton or sodium gradient. F-type ATPases consist of two structural domains, F(1) containing the extramembraneous catalytic core and F(0) containing the membrane proton channel, linked together by a central stalk and a peripheral stalk. During catalysis, ATP synthesis in the catalytic domain of F(1) is coupled via a rotary mechanism of the central stalk subunits to proton translocation.</text>
</comment>
<comment type="function">
    <text evidence="1">Component of the F(0) channel, it forms part of the peripheral stalk, linking F(1) to F(0).</text>
</comment>
<comment type="subunit">
    <text evidence="1">F-type ATPases have 2 components, F(1) - the catalytic core - and F(0) - the membrane proton channel. F(1) has five subunits: alpha(3), beta(3), gamma(1), delta(1), epsilon(1). F(0) has three main subunits: a(1), b(2) and c(10-14). The alpha and beta chains form an alternating ring which encloses part of the gamma chain. F(1) is attached to F(0) by a central stalk formed by the gamma and epsilon chains, while a peripheral stalk is formed by the delta and b chains.</text>
</comment>
<comment type="subcellular location">
    <subcellularLocation>
        <location evidence="1">Cell inner membrane</location>
        <topology evidence="1">Single-pass membrane protein</topology>
    </subcellularLocation>
</comment>
<comment type="similarity">
    <text evidence="1">Belongs to the ATPase B chain family.</text>
</comment>
<evidence type="ECO:0000255" key="1">
    <source>
        <dbReference type="HAMAP-Rule" id="MF_01398"/>
    </source>
</evidence>
<accession>B7I1W0</accession>
<proteinExistence type="inferred from homology"/>
<protein>
    <recommendedName>
        <fullName evidence="1">ATP synthase subunit b</fullName>
    </recommendedName>
    <alternativeName>
        <fullName evidence="1">ATP synthase F(0) sector subunit b</fullName>
    </alternativeName>
    <alternativeName>
        <fullName evidence="1">ATPase subunit I</fullName>
    </alternativeName>
    <alternativeName>
        <fullName evidence="1">F-type ATPase subunit b</fullName>
        <shortName evidence="1">F-ATPase subunit b</shortName>
    </alternativeName>
</protein>
<feature type="chain" id="PRO_0000368288" description="ATP synthase subunit b">
    <location>
        <begin position="1"/>
        <end position="156"/>
    </location>
</feature>
<feature type="transmembrane region" description="Helical" evidence="1">
    <location>
        <begin position="5"/>
        <end position="25"/>
    </location>
</feature>
<reference key="1">
    <citation type="journal article" date="2008" name="J. Bacteriol.">
        <title>Comparative genome sequence analysis of multidrug-resistant Acinetobacter baumannii.</title>
        <authorList>
            <person name="Adams M.D."/>
            <person name="Goglin K."/>
            <person name="Molyneaux N."/>
            <person name="Hujer K.M."/>
            <person name="Lavender H."/>
            <person name="Jamison J.J."/>
            <person name="MacDonald I.J."/>
            <person name="Martin K.M."/>
            <person name="Russo T."/>
            <person name="Campagnari A.A."/>
            <person name="Hujer A.M."/>
            <person name="Bonomo R.A."/>
            <person name="Gill S.R."/>
        </authorList>
    </citation>
    <scope>NUCLEOTIDE SEQUENCE [LARGE SCALE GENOMIC DNA]</scope>
    <source>
        <strain>AB0057</strain>
    </source>
</reference>
<organism>
    <name type="scientific">Acinetobacter baumannii (strain AB0057)</name>
    <dbReference type="NCBI Taxonomy" id="480119"/>
    <lineage>
        <taxon>Bacteria</taxon>
        <taxon>Pseudomonadati</taxon>
        <taxon>Pseudomonadota</taxon>
        <taxon>Gammaproteobacteria</taxon>
        <taxon>Moraxellales</taxon>
        <taxon>Moraxellaceae</taxon>
        <taxon>Acinetobacter</taxon>
        <taxon>Acinetobacter calcoaceticus/baumannii complex</taxon>
    </lineage>
</organism>
<dbReference type="EMBL" id="CP001182">
    <property type="protein sequence ID" value="ACJ39620.1"/>
    <property type="molecule type" value="Genomic_DNA"/>
</dbReference>
<dbReference type="RefSeq" id="WP_001024691.1">
    <property type="nucleotide sequence ID" value="NC_011586.2"/>
</dbReference>
<dbReference type="SMR" id="B7I1W0"/>
<dbReference type="KEGG" id="abn:AB57_0189"/>
<dbReference type="HOGENOM" id="CLU_079215_4_5_6"/>
<dbReference type="Proteomes" id="UP000007094">
    <property type="component" value="Chromosome"/>
</dbReference>
<dbReference type="GO" id="GO:0005886">
    <property type="term" value="C:plasma membrane"/>
    <property type="evidence" value="ECO:0007669"/>
    <property type="project" value="UniProtKB-SubCell"/>
</dbReference>
<dbReference type="GO" id="GO:0045259">
    <property type="term" value="C:proton-transporting ATP synthase complex"/>
    <property type="evidence" value="ECO:0007669"/>
    <property type="project" value="UniProtKB-KW"/>
</dbReference>
<dbReference type="GO" id="GO:0046933">
    <property type="term" value="F:proton-transporting ATP synthase activity, rotational mechanism"/>
    <property type="evidence" value="ECO:0007669"/>
    <property type="project" value="UniProtKB-UniRule"/>
</dbReference>
<dbReference type="GO" id="GO:0046961">
    <property type="term" value="F:proton-transporting ATPase activity, rotational mechanism"/>
    <property type="evidence" value="ECO:0007669"/>
    <property type="project" value="TreeGrafter"/>
</dbReference>
<dbReference type="CDD" id="cd06503">
    <property type="entry name" value="ATP-synt_Fo_b"/>
    <property type="match status" value="1"/>
</dbReference>
<dbReference type="FunFam" id="1.20.5.620:FF:000001">
    <property type="entry name" value="ATP synthase subunit b"/>
    <property type="match status" value="1"/>
</dbReference>
<dbReference type="Gene3D" id="6.10.250.1580">
    <property type="match status" value="1"/>
</dbReference>
<dbReference type="HAMAP" id="MF_01398">
    <property type="entry name" value="ATP_synth_b_bprime"/>
    <property type="match status" value="1"/>
</dbReference>
<dbReference type="InterPro" id="IPR028987">
    <property type="entry name" value="ATP_synth_B-like_membr_sf"/>
</dbReference>
<dbReference type="InterPro" id="IPR002146">
    <property type="entry name" value="ATP_synth_b/b'su_bac/chlpt"/>
</dbReference>
<dbReference type="InterPro" id="IPR005864">
    <property type="entry name" value="ATP_synth_F0_bsu_bac"/>
</dbReference>
<dbReference type="InterPro" id="IPR050059">
    <property type="entry name" value="ATP_synthase_B_chain"/>
</dbReference>
<dbReference type="NCBIfam" id="TIGR01144">
    <property type="entry name" value="ATP_synt_b"/>
    <property type="match status" value="1"/>
</dbReference>
<dbReference type="NCBIfam" id="NF004411">
    <property type="entry name" value="PRK05759.1-2"/>
    <property type="match status" value="1"/>
</dbReference>
<dbReference type="PANTHER" id="PTHR33445:SF1">
    <property type="entry name" value="ATP SYNTHASE SUBUNIT B"/>
    <property type="match status" value="1"/>
</dbReference>
<dbReference type="PANTHER" id="PTHR33445">
    <property type="entry name" value="ATP SYNTHASE SUBUNIT B', CHLOROPLASTIC"/>
    <property type="match status" value="1"/>
</dbReference>
<dbReference type="Pfam" id="PF00430">
    <property type="entry name" value="ATP-synt_B"/>
    <property type="match status" value="1"/>
</dbReference>
<dbReference type="SUPFAM" id="SSF81573">
    <property type="entry name" value="F1F0 ATP synthase subunit B, membrane domain"/>
    <property type="match status" value="1"/>
</dbReference>
<keyword id="KW-0066">ATP synthesis</keyword>
<keyword id="KW-0997">Cell inner membrane</keyword>
<keyword id="KW-1003">Cell membrane</keyword>
<keyword id="KW-0138">CF(0)</keyword>
<keyword id="KW-0375">Hydrogen ion transport</keyword>
<keyword id="KW-0406">Ion transport</keyword>
<keyword id="KW-0472">Membrane</keyword>
<keyword id="KW-0812">Transmembrane</keyword>
<keyword id="KW-1133">Transmembrane helix</keyword>
<keyword id="KW-0813">Transport</keyword>
<name>ATPF_ACIB5</name>